<organism>
    <name type="scientific">Drosophila pseudoobscura pseudoobscura</name>
    <name type="common">Fruit fly</name>
    <dbReference type="NCBI Taxonomy" id="46245"/>
    <lineage>
        <taxon>Eukaryota</taxon>
        <taxon>Metazoa</taxon>
        <taxon>Ecdysozoa</taxon>
        <taxon>Arthropoda</taxon>
        <taxon>Hexapoda</taxon>
        <taxon>Insecta</taxon>
        <taxon>Pterygota</taxon>
        <taxon>Neoptera</taxon>
        <taxon>Endopterygota</taxon>
        <taxon>Diptera</taxon>
        <taxon>Brachycera</taxon>
        <taxon>Muscomorpha</taxon>
        <taxon>Ephydroidea</taxon>
        <taxon>Drosophilidae</taxon>
        <taxon>Drosophila</taxon>
        <taxon>Sophophora</taxon>
    </lineage>
</organism>
<reference key="1">
    <citation type="journal article" date="2005" name="Genome Res.">
        <title>Comparative genome sequencing of Drosophila pseudoobscura: chromosomal, gene, and cis-element evolution.</title>
        <authorList>
            <person name="Richards S."/>
            <person name="Liu Y."/>
            <person name="Bettencourt B.R."/>
            <person name="Hradecky P."/>
            <person name="Letovsky S."/>
            <person name="Nielsen R."/>
            <person name="Thornton K."/>
            <person name="Hubisz M.J."/>
            <person name="Chen R."/>
            <person name="Meisel R.P."/>
            <person name="Couronne O."/>
            <person name="Hua S."/>
            <person name="Smith M.A."/>
            <person name="Zhang P."/>
            <person name="Liu J."/>
            <person name="Bussemaker H.J."/>
            <person name="van Batenburg M.F."/>
            <person name="Howells S.L."/>
            <person name="Scherer S.E."/>
            <person name="Sodergren E."/>
            <person name="Matthews B.B."/>
            <person name="Crosby M.A."/>
            <person name="Schroeder A.J."/>
            <person name="Ortiz-Barrientos D."/>
            <person name="Rives C.M."/>
            <person name="Metzker M.L."/>
            <person name="Muzny D.M."/>
            <person name="Scott G."/>
            <person name="Steffen D."/>
            <person name="Wheeler D.A."/>
            <person name="Worley K.C."/>
            <person name="Havlak P."/>
            <person name="Durbin K.J."/>
            <person name="Egan A."/>
            <person name="Gill R."/>
            <person name="Hume J."/>
            <person name="Morgan M.B."/>
            <person name="Miner G."/>
            <person name="Hamilton C."/>
            <person name="Huang Y."/>
            <person name="Waldron L."/>
            <person name="Verduzco D."/>
            <person name="Clerc-Blankenburg K.P."/>
            <person name="Dubchak I."/>
            <person name="Noor M.A.F."/>
            <person name="Anderson W."/>
            <person name="White K.P."/>
            <person name="Clark A.G."/>
            <person name="Schaeffer S.W."/>
            <person name="Gelbart W.M."/>
            <person name="Weinstock G.M."/>
            <person name="Gibbs R.A."/>
        </authorList>
    </citation>
    <scope>NUCLEOTIDE SEQUENCE [LARGE SCALE GENOMIC DNA]</scope>
    <source>
        <strain>MV2-25 / Tucson 14011-0121.94</strain>
    </source>
</reference>
<reference key="2">
    <citation type="journal article" date="1997" name="J. Cell Biol.">
        <title>Conservation of the centromere/kinetochore protein ZW10.</title>
        <authorList>
            <person name="Starr D.A."/>
            <person name="Williams B.C."/>
            <person name="Li Z."/>
            <person name="Etemad-Moghadam B."/>
            <person name="Dawe R.K."/>
            <person name="Goldberg M.L."/>
        </authorList>
    </citation>
    <scope>NUCLEOTIDE SEQUENCE [GENOMIC DNA] OF 240-718</scope>
</reference>
<gene>
    <name type="primary">mit(1)15</name>
    <name type="synonym">ZW10</name>
    <name type="ORF">GA22111</name>
</gene>
<sequence>MAARAQIKLLPEMFQSNGCASLEDTKSTVSKVQTRTERFQERVRKHIDENYSEFMTNHTSPDIFLEESSSLGREINDLLETVGTEGLAALNGSSTQLADHSRELRELMLGLQVSEHILKIDELFQCVEEAKGTKDYLVVLDLVGRLRSLIYGEGEAATQDVVRIFQALECYETIKVKYHVQAHLLQQNMQERFDRLVQLNCKSFPNSKCVTLLVSKEEGQLHDIVIALFQERYNPVRLCEFLLENCIEPLILKPVGVECNENAEAGTYVQLSLSYSTKESGTASGTSTQLRPNYKQVLEHFRLLLQTLSGINHSLSSSQHVFSIIGDHVKDRMMHLLVNDCLIPAVPETMEEYQASTLCEDVAHFEQYLADSFLINPEVDRGLSQFIEQYGTYYRNRLCSRVLESTREIIQRDLQDMVLVAPNNQAMDVTGCDPFLFPRCMVSRSAQDFMKLMERILRQPTEKPGEDEADPLAGVIGMMLQTYIDEVPKVHKKLLESIPQQSVLFHNNCMYFTHWVAQNANKGIESFPALVKTLQATGTMHFRVQVTYQTSILMDIMESFEFESPHTLGTGPLKLVRQCLRQLELLKNVWQNVLPDNVYNSTFVELLHAFINELVRHIFTQRDISATMASDLSDLIDVVLEKAPKLFRDPHEVHQVRSWMKLQQLKTMMNASLKEITELWCKGAGPLTANYKADEIRYLIRALFQDTDRRAKAITQIM</sequence>
<proteinExistence type="inferred from homology"/>
<accession>O44218</accession>
<accession>Q29GT8</accession>
<dbReference type="EMBL" id="CH379064">
    <property type="protein sequence ID" value="EAL32021.1"/>
    <property type="status" value="ALT_SEQ"/>
    <property type="molecule type" value="Genomic_DNA"/>
</dbReference>
<dbReference type="EMBL" id="U54997">
    <property type="protein sequence ID" value="AAB88239.1"/>
    <property type="molecule type" value="Genomic_DNA"/>
</dbReference>
<dbReference type="RefSeq" id="XP_001354965.1">
    <property type="nucleotide sequence ID" value="XM_001354929.2"/>
</dbReference>
<dbReference type="SMR" id="O44218"/>
<dbReference type="FunCoup" id="O44218">
    <property type="interactions" value="1855"/>
</dbReference>
<dbReference type="STRING" id="46245.O44218"/>
<dbReference type="EnsemblMetazoa" id="FBtr0282207">
    <property type="protein sequence ID" value="FBpp0280645"/>
    <property type="gene ID" value="FBgn0022854"/>
</dbReference>
<dbReference type="GeneID" id="4815208"/>
<dbReference type="KEGG" id="dpo:4815208"/>
<dbReference type="CTD" id="9183"/>
<dbReference type="eggNOG" id="KOG2163">
    <property type="taxonomic scope" value="Eukaryota"/>
</dbReference>
<dbReference type="HOGENOM" id="CLU_012948_0_0_1"/>
<dbReference type="InParanoid" id="O44218"/>
<dbReference type="OMA" id="MMNASLK"/>
<dbReference type="PhylomeDB" id="O44218"/>
<dbReference type="Proteomes" id="UP000001819">
    <property type="component" value="Chromosome X"/>
</dbReference>
<dbReference type="Bgee" id="FBgn0022854">
    <property type="expression patterns" value="Expressed in female reproductive system and 3 other cell types or tissues"/>
</dbReference>
<dbReference type="GO" id="GO:0005737">
    <property type="term" value="C:cytoplasm"/>
    <property type="evidence" value="ECO:0007669"/>
    <property type="project" value="UniProtKB-SubCell"/>
</dbReference>
<dbReference type="GO" id="GO:0005634">
    <property type="term" value="C:nucleus"/>
    <property type="evidence" value="ECO:0007669"/>
    <property type="project" value="UniProtKB-SubCell"/>
</dbReference>
<dbReference type="GO" id="GO:1990423">
    <property type="term" value="C:RZZ complex"/>
    <property type="evidence" value="ECO:0007669"/>
    <property type="project" value="TreeGrafter"/>
</dbReference>
<dbReference type="GO" id="GO:0051301">
    <property type="term" value="P:cell division"/>
    <property type="evidence" value="ECO:0007669"/>
    <property type="project" value="UniProtKB-KW"/>
</dbReference>
<dbReference type="GO" id="GO:0006888">
    <property type="term" value="P:endoplasmic reticulum to Golgi vesicle-mediated transport"/>
    <property type="evidence" value="ECO:0007669"/>
    <property type="project" value="TreeGrafter"/>
</dbReference>
<dbReference type="GO" id="GO:0051321">
    <property type="term" value="P:meiotic cell cycle"/>
    <property type="evidence" value="ECO:0007669"/>
    <property type="project" value="UniProtKB-KW"/>
</dbReference>
<dbReference type="GO" id="GO:0007094">
    <property type="term" value="P:mitotic spindle assembly checkpoint signaling"/>
    <property type="evidence" value="ECO:0007669"/>
    <property type="project" value="TreeGrafter"/>
</dbReference>
<dbReference type="FunFam" id="1.10.357.150:FF:000003">
    <property type="entry name" value="Centromere/kinetochore protein zw10"/>
    <property type="match status" value="1"/>
</dbReference>
<dbReference type="Gene3D" id="1.10.357.150">
    <property type="match status" value="1"/>
</dbReference>
<dbReference type="InterPro" id="IPR046362">
    <property type="entry name" value="Zw10/DSL1_C_sf"/>
</dbReference>
<dbReference type="InterPro" id="IPR048343">
    <property type="entry name" value="ZW10_C"/>
</dbReference>
<dbReference type="InterPro" id="IPR055148">
    <property type="entry name" value="ZW10_C_2"/>
</dbReference>
<dbReference type="InterPro" id="IPR048344">
    <property type="entry name" value="Zw10_middle"/>
</dbReference>
<dbReference type="InterPro" id="IPR009361">
    <property type="entry name" value="Zw10_N"/>
</dbReference>
<dbReference type="PANTHER" id="PTHR12205">
    <property type="entry name" value="CENTROMERE/KINETOCHORE PROTEIN ZW10"/>
    <property type="match status" value="1"/>
</dbReference>
<dbReference type="PANTHER" id="PTHR12205:SF0">
    <property type="entry name" value="CENTROMERE_KINETOCHORE PROTEIN ZW10 HOMOLOG"/>
    <property type="match status" value="1"/>
</dbReference>
<dbReference type="Pfam" id="PF20666">
    <property type="entry name" value="ZW10_C"/>
    <property type="match status" value="1"/>
</dbReference>
<dbReference type="Pfam" id="PF22766">
    <property type="entry name" value="ZW10_C2"/>
    <property type="match status" value="1"/>
</dbReference>
<dbReference type="Pfam" id="PF20665">
    <property type="entry name" value="Zw10_middle"/>
    <property type="match status" value="1"/>
</dbReference>
<dbReference type="Pfam" id="PF06248">
    <property type="entry name" value="Zw10_N"/>
    <property type="match status" value="1"/>
</dbReference>
<keyword id="KW-0131">Cell cycle</keyword>
<keyword id="KW-0132">Cell division</keyword>
<keyword id="KW-0137">Centromere</keyword>
<keyword id="KW-0158">Chromosome</keyword>
<keyword id="KW-0963">Cytoplasm</keyword>
<keyword id="KW-0995">Kinetochore</keyword>
<keyword id="KW-0469">Meiosis</keyword>
<keyword id="KW-0498">Mitosis</keyword>
<keyword id="KW-0539">Nucleus</keyword>
<keyword id="KW-1185">Reference proteome</keyword>
<evidence type="ECO:0000250" key="1"/>
<evidence type="ECO:0000305" key="2"/>
<protein>
    <recommendedName>
        <fullName>Centromere/kinetochore protein zw10</fullName>
    </recommendedName>
    <alternativeName>
        <fullName>Mitotic 15 protein</fullName>
    </alternativeName>
</protein>
<feature type="chain" id="PRO_0000184962" description="Centromere/kinetochore protein zw10">
    <location>
        <begin position="1"/>
        <end position="718"/>
    </location>
</feature>
<feature type="sequence conflict" description="In Ref. 2; AAB88239." evidence="2" ref="2">
    <original>ASG</original>
    <variation>PSS</variation>
    <location>
        <begin position="283"/>
        <end position="285"/>
    </location>
</feature>
<feature type="sequence conflict" description="In Ref. 2; AAB88239." evidence="2" ref="2">
    <original>D</original>
    <variation>V</variation>
    <location>
        <position position="448"/>
    </location>
</feature>
<feature type="sequence conflict" description="In Ref. 2; AAB88239." evidence="2" ref="2">
    <original>R</original>
    <variation>A</variation>
    <location>
        <position position="458"/>
    </location>
</feature>
<feature type="sequence conflict" description="In Ref. 2; AAB88239." evidence="2" ref="2">
    <original>P</original>
    <variation>T</variation>
    <location>
        <position position="565"/>
    </location>
</feature>
<feature type="sequence conflict" description="In Ref. 2; AAB88239." evidence="2" ref="2">
    <original>R</original>
    <variation>V</variation>
    <location>
        <position position="581"/>
    </location>
</feature>
<feature type="sequence conflict" description="In Ref. 2; AAB88239." evidence="2" ref="2">
    <original>I</original>
    <variation>D</variation>
    <location>
        <position position="700"/>
    </location>
</feature>
<comment type="function">
    <text evidence="1">Required for accurate chromosome segregation.</text>
</comment>
<comment type="subcellular location">
    <subcellularLocation>
        <location evidence="1">Cytoplasm</location>
    </subcellularLocation>
    <subcellularLocation>
        <location evidence="1">Nucleus</location>
    </subcellularLocation>
    <subcellularLocation>
        <location evidence="1">Chromosome</location>
        <location evidence="1">Centromere</location>
        <location evidence="1">Kinetochore</location>
    </subcellularLocation>
    <text evidence="1">Excluded from the nucleus during interphase but migrates into the nuclear zone during prometaphase. At metaphase, found in a filamentous structure that may be specifically associated with kinetochore microtubules. At anaphase, found at or near kinetochores of separating chromosomes. At the beginning of telophase, becomes excluded again from the nucleus and is dispersed in the cytoplasm (By similarity).</text>
</comment>
<comment type="similarity">
    <text evidence="2">Belongs to the ZW10 family.</text>
</comment>
<comment type="sequence caution" evidence="2">
    <conflict type="erroneous gene model prediction">
        <sequence resource="EMBL-CDS" id="EAL32021"/>
    </conflict>
</comment>
<name>ZW10_DROPS</name>